<reference key="1">
    <citation type="submission" date="2004-11" db="EMBL/GenBank/DDBJ databases">
        <authorList>
            <consortium name="The German cDNA consortium"/>
        </authorList>
    </citation>
    <scope>NUCLEOTIDE SEQUENCE [LARGE SCALE MRNA]</scope>
    <source>
        <tissue>Heart</tissue>
    </source>
</reference>
<comment type="function">
    <text evidence="1">Participates in various redox reactions through the reversible oxidation of its active center dithiol to a disulfide and catalyzes dithiol-disulfide exchange reactions (By similarity). Plays a role in the reversible S-nitrosylation of cysteine residues in target proteins, and thereby contributes to the response to intracellular nitric oxide. Nitrosylates the active site Cys of CASP3 in response to nitric oxide (NO), and thereby inhibits caspase-3 activity. Induces the FOS/JUN AP-1 DNA binding activity in ionizing radiation (IR) cells through its oxidation/reduction status and stimulates AP-1 transcriptional activity (By similarity).</text>
</comment>
<comment type="subunit">
    <text evidence="1">Homodimer; disulfide-linked. Interacts with TXNIP through the redox-active site. Interacts with MAP3K5 and CASP3. Interacts with APEX1; the interaction stimulates the FOS/JUN AP-1 DNA-binding activity in a redox-dependent manner (By similarity).</text>
</comment>
<comment type="subcellular location">
    <subcellularLocation>
        <location evidence="2">Nucleus</location>
    </subcellularLocation>
    <subcellularLocation>
        <location evidence="2">Cytoplasm</location>
    </subcellularLocation>
    <subcellularLocation>
        <location evidence="2">Secreted</location>
    </subcellularLocation>
    <text evidence="2">Translocates from the cytoplasm into the nucleus after phorbol 12-myristate 13-acetate induction (PMA). Predominantly in the cytoplasm in non irradiated cells. Radiation induces translocation of TRX from the cytoplasm to the nucleus. Secreted by a leaderless secretory pathway.</text>
</comment>
<comment type="PTM">
    <text evidence="1">In the fully reduced protein, both Cys-69 and Cys-73 are nitrosylated in response to nitric oxide (NO). When two disulfide bonds are present in the protein, only Cys-73 is nitrosylated. Cys-73 can serve as donor for nitrosylation of target proteins (By similarity).</text>
</comment>
<comment type="similarity">
    <text evidence="5">Belongs to the thioredoxin family.</text>
</comment>
<organism>
    <name type="scientific">Pongo abelii</name>
    <name type="common">Sumatran orangutan</name>
    <name type="synonym">Pongo pygmaeus abelii</name>
    <dbReference type="NCBI Taxonomy" id="9601"/>
    <lineage>
        <taxon>Eukaryota</taxon>
        <taxon>Metazoa</taxon>
        <taxon>Chordata</taxon>
        <taxon>Craniata</taxon>
        <taxon>Vertebrata</taxon>
        <taxon>Euteleostomi</taxon>
        <taxon>Mammalia</taxon>
        <taxon>Eutheria</taxon>
        <taxon>Euarchontoglires</taxon>
        <taxon>Primates</taxon>
        <taxon>Haplorrhini</taxon>
        <taxon>Catarrhini</taxon>
        <taxon>Hominidae</taxon>
        <taxon>Pongo</taxon>
    </lineage>
</organism>
<accession>Q5R9M3</accession>
<evidence type="ECO:0000250" key="1"/>
<evidence type="ECO:0000250" key="2">
    <source>
        <dbReference type="UniProtKB" id="P10599"/>
    </source>
</evidence>
<evidence type="ECO:0000250" key="3">
    <source>
        <dbReference type="UniProtKB" id="P10639"/>
    </source>
</evidence>
<evidence type="ECO:0000255" key="4">
    <source>
        <dbReference type="PROSITE-ProRule" id="PRU00691"/>
    </source>
</evidence>
<evidence type="ECO:0000305" key="5"/>
<dbReference type="EMBL" id="CR859364">
    <property type="protein sequence ID" value="CAH91537.1"/>
    <property type="molecule type" value="mRNA"/>
</dbReference>
<dbReference type="RefSeq" id="NP_001125903.1">
    <property type="nucleotide sequence ID" value="NM_001132431.1"/>
</dbReference>
<dbReference type="BMRB" id="Q5R9M3"/>
<dbReference type="SMR" id="Q5R9M3"/>
<dbReference type="FunCoup" id="Q5R9M3">
    <property type="interactions" value="2186"/>
</dbReference>
<dbReference type="STRING" id="9601.ENSPPYP00000021834"/>
<dbReference type="GeneID" id="100172836"/>
<dbReference type="KEGG" id="pon:100172836"/>
<dbReference type="CTD" id="7295"/>
<dbReference type="eggNOG" id="KOG0907">
    <property type="taxonomic scope" value="Eukaryota"/>
</dbReference>
<dbReference type="InParanoid" id="Q5R9M3"/>
<dbReference type="OrthoDB" id="2121326at2759"/>
<dbReference type="Proteomes" id="UP000001595">
    <property type="component" value="Unplaced"/>
</dbReference>
<dbReference type="GO" id="GO:0005737">
    <property type="term" value="C:cytoplasm"/>
    <property type="evidence" value="ECO:0007669"/>
    <property type="project" value="UniProtKB-SubCell"/>
</dbReference>
<dbReference type="GO" id="GO:0005576">
    <property type="term" value="C:extracellular region"/>
    <property type="evidence" value="ECO:0007669"/>
    <property type="project" value="UniProtKB-SubCell"/>
</dbReference>
<dbReference type="GO" id="GO:0005634">
    <property type="term" value="C:nucleus"/>
    <property type="evidence" value="ECO:0007669"/>
    <property type="project" value="UniProtKB-SubCell"/>
</dbReference>
<dbReference type="GO" id="GO:0015035">
    <property type="term" value="F:protein-disulfide reductase activity"/>
    <property type="evidence" value="ECO:0007669"/>
    <property type="project" value="InterPro"/>
</dbReference>
<dbReference type="GO" id="GO:0043388">
    <property type="term" value="P:positive regulation of DNA binding"/>
    <property type="evidence" value="ECO:0000250"/>
    <property type="project" value="UniProtKB"/>
</dbReference>
<dbReference type="GO" id="GO:0009314">
    <property type="term" value="P:response to radiation"/>
    <property type="evidence" value="ECO:0000250"/>
    <property type="project" value="UniProtKB"/>
</dbReference>
<dbReference type="CDD" id="cd02947">
    <property type="entry name" value="TRX_family"/>
    <property type="match status" value="1"/>
</dbReference>
<dbReference type="FunFam" id="3.40.30.10:FF:000130">
    <property type="entry name" value="Thioredoxin"/>
    <property type="match status" value="1"/>
</dbReference>
<dbReference type="Gene3D" id="3.40.30.10">
    <property type="entry name" value="Glutaredoxin"/>
    <property type="match status" value="1"/>
</dbReference>
<dbReference type="InterPro" id="IPR005746">
    <property type="entry name" value="Thioredoxin"/>
</dbReference>
<dbReference type="InterPro" id="IPR036249">
    <property type="entry name" value="Thioredoxin-like_sf"/>
</dbReference>
<dbReference type="InterPro" id="IPR017937">
    <property type="entry name" value="Thioredoxin_CS"/>
</dbReference>
<dbReference type="InterPro" id="IPR013766">
    <property type="entry name" value="Thioredoxin_domain"/>
</dbReference>
<dbReference type="PANTHER" id="PTHR46115">
    <property type="entry name" value="THIOREDOXIN-LIKE PROTEIN 1"/>
    <property type="match status" value="1"/>
</dbReference>
<dbReference type="Pfam" id="PF00085">
    <property type="entry name" value="Thioredoxin"/>
    <property type="match status" value="1"/>
</dbReference>
<dbReference type="PIRSF" id="PIRSF000077">
    <property type="entry name" value="Thioredoxin"/>
    <property type="match status" value="1"/>
</dbReference>
<dbReference type="PRINTS" id="PR00421">
    <property type="entry name" value="THIOREDOXIN"/>
</dbReference>
<dbReference type="SUPFAM" id="SSF52833">
    <property type="entry name" value="Thioredoxin-like"/>
    <property type="match status" value="1"/>
</dbReference>
<dbReference type="PROSITE" id="PS00194">
    <property type="entry name" value="THIOREDOXIN_1"/>
    <property type="match status" value="1"/>
</dbReference>
<dbReference type="PROSITE" id="PS51352">
    <property type="entry name" value="THIOREDOXIN_2"/>
    <property type="match status" value="1"/>
</dbReference>
<gene>
    <name type="primary">TXN</name>
</gene>
<name>THIO_PONAB</name>
<proteinExistence type="inferred from homology"/>
<protein>
    <recommendedName>
        <fullName>Thioredoxin</fullName>
        <shortName>Trx</shortName>
    </recommendedName>
</protein>
<sequence length="106" mass="11885">MVKQIESKTAFQEALDAAGDKLVVVDFSATWCGPCKMIKPFFHSLSEKYSNVIFLEVDVDDCQDVASECEVKCMPTFQFFFKKGQKVGEFSGANKEKLEATINELV</sequence>
<feature type="chain" id="PRO_0000120009" description="Thioredoxin">
    <location>
        <begin position="1"/>
        <end position="106"/>
    </location>
</feature>
<feature type="domain" description="Thioredoxin" evidence="4">
    <location>
        <begin position="3"/>
        <end position="106"/>
    </location>
</feature>
<feature type="active site" description="Nucleophile" evidence="1">
    <location>
        <position position="32"/>
    </location>
</feature>
<feature type="active site" description="Nucleophile" evidence="1">
    <location>
        <position position="35"/>
    </location>
</feature>
<feature type="site" description="Deprotonates C-terminal active site Cys" evidence="1">
    <location>
        <position position="26"/>
    </location>
</feature>
<feature type="site" description="Contributes to redox potential value" evidence="1">
    <location>
        <position position="33"/>
    </location>
</feature>
<feature type="site" description="Contributes to redox potential value" evidence="1">
    <location>
        <position position="34"/>
    </location>
</feature>
<feature type="modified residue" description="N6-acetyllysine" evidence="2">
    <location>
        <position position="3"/>
    </location>
</feature>
<feature type="modified residue" description="N6-succinyllysine" evidence="3">
    <location>
        <position position="8"/>
    </location>
</feature>
<feature type="modified residue" description="N6-acetyllysine" evidence="2">
    <location>
        <position position="39"/>
    </location>
</feature>
<feature type="modified residue" description="S-nitrosocysteine" evidence="2">
    <location>
        <position position="62"/>
    </location>
</feature>
<feature type="modified residue" description="S-nitrosocysteine" evidence="2">
    <location>
        <position position="69"/>
    </location>
</feature>
<feature type="modified residue" description="S-nitrosocysteine; alternate" evidence="2">
    <location>
        <position position="73"/>
    </location>
</feature>
<feature type="modified residue" description="N6-acetyllysine; alternate" evidence="3">
    <location>
        <position position="95"/>
    </location>
</feature>
<feature type="modified residue" description="N6-succinyllysine; alternate" evidence="3">
    <location>
        <position position="95"/>
    </location>
</feature>
<feature type="disulfide bond" description="Redox-active" evidence="4">
    <location>
        <begin position="32"/>
        <end position="35"/>
    </location>
</feature>
<feature type="disulfide bond" description="Interchain; alternate" evidence="1">
    <location>
        <position position="73"/>
    </location>
</feature>
<keyword id="KW-0007">Acetylation</keyword>
<keyword id="KW-0010">Activator</keyword>
<keyword id="KW-0963">Cytoplasm</keyword>
<keyword id="KW-1015">Disulfide bond</keyword>
<keyword id="KW-0249">Electron transport</keyword>
<keyword id="KW-0539">Nucleus</keyword>
<keyword id="KW-0676">Redox-active center</keyword>
<keyword id="KW-1185">Reference proteome</keyword>
<keyword id="KW-0702">S-nitrosylation</keyword>
<keyword id="KW-0964">Secreted</keyword>
<keyword id="KW-0804">Transcription</keyword>
<keyword id="KW-0805">Transcription regulation</keyword>
<keyword id="KW-0813">Transport</keyword>